<protein>
    <recommendedName>
        <fullName evidence="1">Ribulose bisphosphate carboxylase large chain</fullName>
        <shortName evidence="1">RuBisCO large subunit</shortName>
        <ecNumber evidence="1">4.1.1.39</ecNumber>
    </recommendedName>
</protein>
<evidence type="ECO:0000255" key="1">
    <source>
        <dbReference type="HAMAP-Rule" id="MF_01338"/>
    </source>
</evidence>
<name>RBL_CERS4</name>
<gene>
    <name evidence="1" type="primary">cbbL</name>
    <name type="ordered locus">RHOS4_28940</name>
    <name type="ORF">RSP_1282</name>
</gene>
<accession>Q3IYC2</accession>
<organism>
    <name type="scientific">Cereibacter sphaeroides (strain ATCC 17023 / DSM 158 / JCM 6121 / CCUG 31486 / LMG 2827 / NBRC 12203 / NCIMB 8253 / ATH 2.4.1.)</name>
    <name type="common">Rhodobacter sphaeroides</name>
    <dbReference type="NCBI Taxonomy" id="272943"/>
    <lineage>
        <taxon>Bacteria</taxon>
        <taxon>Pseudomonadati</taxon>
        <taxon>Pseudomonadota</taxon>
        <taxon>Alphaproteobacteria</taxon>
        <taxon>Rhodobacterales</taxon>
        <taxon>Paracoccaceae</taxon>
        <taxon>Cereibacter</taxon>
    </lineage>
</organism>
<dbReference type="EC" id="4.1.1.39" evidence="1"/>
<dbReference type="EMBL" id="CP000143">
    <property type="protein sequence ID" value="ABA80462.1"/>
    <property type="molecule type" value="Genomic_DNA"/>
</dbReference>
<dbReference type="RefSeq" id="WP_002721829.1">
    <property type="nucleotide sequence ID" value="NZ_CP030271.1"/>
</dbReference>
<dbReference type="RefSeq" id="YP_354363.1">
    <property type="nucleotide sequence ID" value="NC_007493.2"/>
</dbReference>
<dbReference type="SMR" id="Q3IYC2"/>
<dbReference type="DIP" id="DIP-59569N"/>
<dbReference type="IntAct" id="Q3IYC2">
    <property type="interactions" value="1"/>
</dbReference>
<dbReference type="STRING" id="272943.RSP_1282"/>
<dbReference type="EnsemblBacteria" id="ABA80462">
    <property type="protein sequence ID" value="ABA80462"/>
    <property type="gene ID" value="RSP_1282"/>
</dbReference>
<dbReference type="KEGG" id="rsp:RSP_1282"/>
<dbReference type="PATRIC" id="fig|272943.9.peg.3263"/>
<dbReference type="eggNOG" id="COG1850">
    <property type="taxonomic scope" value="Bacteria"/>
</dbReference>
<dbReference type="OrthoDB" id="9764279at2"/>
<dbReference type="PhylomeDB" id="Q3IYC2"/>
<dbReference type="Proteomes" id="UP000002703">
    <property type="component" value="Chromosome 1"/>
</dbReference>
<dbReference type="GO" id="GO:0000287">
    <property type="term" value="F:magnesium ion binding"/>
    <property type="evidence" value="ECO:0007669"/>
    <property type="project" value="UniProtKB-UniRule"/>
</dbReference>
<dbReference type="GO" id="GO:0004497">
    <property type="term" value="F:monooxygenase activity"/>
    <property type="evidence" value="ECO:0007669"/>
    <property type="project" value="UniProtKB-KW"/>
</dbReference>
<dbReference type="GO" id="GO:0016984">
    <property type="term" value="F:ribulose-bisphosphate carboxylase activity"/>
    <property type="evidence" value="ECO:0007669"/>
    <property type="project" value="UniProtKB-UniRule"/>
</dbReference>
<dbReference type="GO" id="GO:0019253">
    <property type="term" value="P:reductive pentose-phosphate cycle"/>
    <property type="evidence" value="ECO:0007669"/>
    <property type="project" value="UniProtKB-UniRule"/>
</dbReference>
<dbReference type="CDD" id="cd08212">
    <property type="entry name" value="RuBisCO_large_I"/>
    <property type="match status" value="1"/>
</dbReference>
<dbReference type="Gene3D" id="3.20.20.110">
    <property type="entry name" value="Ribulose bisphosphate carboxylase, large subunit, C-terminal domain"/>
    <property type="match status" value="1"/>
</dbReference>
<dbReference type="Gene3D" id="3.30.70.150">
    <property type="entry name" value="RuBisCO large subunit, N-terminal domain"/>
    <property type="match status" value="1"/>
</dbReference>
<dbReference type="HAMAP" id="MF_01338">
    <property type="entry name" value="RuBisCO_L_type1"/>
    <property type="match status" value="1"/>
</dbReference>
<dbReference type="InterPro" id="IPR033966">
    <property type="entry name" value="RuBisCO"/>
</dbReference>
<dbReference type="InterPro" id="IPR020878">
    <property type="entry name" value="RuBisCo_large_chain_AS"/>
</dbReference>
<dbReference type="InterPro" id="IPR000685">
    <property type="entry name" value="RuBisCO_lsu_C"/>
</dbReference>
<dbReference type="InterPro" id="IPR036376">
    <property type="entry name" value="RuBisCO_lsu_C_sf"/>
</dbReference>
<dbReference type="InterPro" id="IPR017443">
    <property type="entry name" value="RuBisCO_lsu_fd_N"/>
</dbReference>
<dbReference type="InterPro" id="IPR036422">
    <property type="entry name" value="RuBisCO_lsu_N_sf"/>
</dbReference>
<dbReference type="InterPro" id="IPR020888">
    <property type="entry name" value="RuBisCO_lsuI"/>
</dbReference>
<dbReference type="NCBIfam" id="NF003252">
    <property type="entry name" value="PRK04208.1"/>
    <property type="match status" value="1"/>
</dbReference>
<dbReference type="PANTHER" id="PTHR42704">
    <property type="entry name" value="RIBULOSE BISPHOSPHATE CARBOXYLASE"/>
    <property type="match status" value="1"/>
</dbReference>
<dbReference type="PANTHER" id="PTHR42704:SF17">
    <property type="entry name" value="RIBULOSE BISPHOSPHATE CARBOXYLASE LARGE CHAIN"/>
    <property type="match status" value="1"/>
</dbReference>
<dbReference type="Pfam" id="PF00016">
    <property type="entry name" value="RuBisCO_large"/>
    <property type="match status" value="1"/>
</dbReference>
<dbReference type="Pfam" id="PF02788">
    <property type="entry name" value="RuBisCO_large_N"/>
    <property type="match status" value="1"/>
</dbReference>
<dbReference type="SFLD" id="SFLDG01052">
    <property type="entry name" value="RuBisCO"/>
    <property type="match status" value="1"/>
</dbReference>
<dbReference type="SFLD" id="SFLDS00014">
    <property type="entry name" value="RuBisCO"/>
    <property type="match status" value="1"/>
</dbReference>
<dbReference type="SFLD" id="SFLDG00301">
    <property type="entry name" value="RuBisCO-like_proteins"/>
    <property type="match status" value="1"/>
</dbReference>
<dbReference type="SUPFAM" id="SSF51649">
    <property type="entry name" value="RuBisCo, C-terminal domain"/>
    <property type="match status" value="1"/>
</dbReference>
<dbReference type="SUPFAM" id="SSF54966">
    <property type="entry name" value="RuBisCO, large subunit, small (N-terminal) domain"/>
    <property type="match status" value="1"/>
</dbReference>
<dbReference type="PROSITE" id="PS00157">
    <property type="entry name" value="RUBISCO_LARGE"/>
    <property type="match status" value="1"/>
</dbReference>
<proteinExistence type="inferred from homology"/>
<sequence>MDTKTTEIKGKERYKAGVLKYAQMGYWDGDYVPKDTDVLALFRITPQEGVDPVEAAAAVAGESSTATWTVVWTDRLTACDSYRAKAYRVEPVPGTPGQYFCYVAYDLILFEEGSIANLTASIIGNVFSFKPLKAARLEDMRFPVAYVKTYKGPPTGIVGERERLDKFGKPLLGATTKPKLGLSGKNYGRVVYEGLKGGLDFMKDDENINSQPFMHWRDRFLYVMEAVNLASAQTGEVKGHYLNITAGTMEEMYRRAEFAKSLGSVIVMVDLIIGYTAIQSISEWCRQNDMILHMHRAGHGTYTRQKNHGISFRVIAKWLRLAGVDHLHCGTAVGKLEGDPLTVQGYYNVCREPFNTVDLPRGIFFEQDWADLRKVMPVASGGIHAGQMHQLLSLFGDDVVLQFGGGTIGHPMGIQAGATANRVALEAMVLARNEGRNIDVEGPEILRAAAKWCKPLEAALDTWGNITFNYTSTDTSDFVPTASVAM</sequence>
<reference key="1">
    <citation type="submission" date="2005-09" db="EMBL/GenBank/DDBJ databases">
        <title>Complete sequence of chromosome 1 of Rhodobacter sphaeroides 2.4.1.</title>
        <authorList>
            <person name="Copeland A."/>
            <person name="Lucas S."/>
            <person name="Lapidus A."/>
            <person name="Barry K."/>
            <person name="Detter J.C."/>
            <person name="Glavina T."/>
            <person name="Hammon N."/>
            <person name="Israni S."/>
            <person name="Pitluck S."/>
            <person name="Richardson P."/>
            <person name="Mackenzie C."/>
            <person name="Choudhary M."/>
            <person name="Larimer F."/>
            <person name="Hauser L.J."/>
            <person name="Land M."/>
            <person name="Donohue T.J."/>
            <person name="Kaplan S."/>
        </authorList>
    </citation>
    <scope>NUCLEOTIDE SEQUENCE [LARGE SCALE GENOMIC DNA]</scope>
    <source>
        <strain>ATCC 17023 / DSM 158 / JCM 6121 / CCUG 31486 / LMG 2827 / NBRC 12203 / NCIMB 8253 / ATH 2.4.1.</strain>
    </source>
</reference>
<feature type="chain" id="PRO_0000251460" description="Ribulose bisphosphate carboxylase large chain">
    <location>
        <begin position="1"/>
        <end position="486"/>
    </location>
</feature>
<feature type="active site" description="Proton acceptor" evidence="1">
    <location>
        <position position="177"/>
    </location>
</feature>
<feature type="active site" description="Proton acceptor" evidence="1">
    <location>
        <position position="295"/>
    </location>
</feature>
<feature type="binding site" description="in homodimeric partner" evidence="1">
    <location>
        <position position="125"/>
    </location>
    <ligand>
        <name>substrate</name>
    </ligand>
</feature>
<feature type="binding site" evidence="1">
    <location>
        <position position="175"/>
    </location>
    <ligand>
        <name>substrate</name>
    </ligand>
</feature>
<feature type="binding site" evidence="1">
    <location>
        <position position="179"/>
    </location>
    <ligand>
        <name>substrate</name>
    </ligand>
</feature>
<feature type="binding site" description="via carbamate group" evidence="1">
    <location>
        <position position="203"/>
    </location>
    <ligand>
        <name>Mg(2+)</name>
        <dbReference type="ChEBI" id="CHEBI:18420"/>
    </ligand>
</feature>
<feature type="binding site" evidence="1">
    <location>
        <position position="205"/>
    </location>
    <ligand>
        <name>Mg(2+)</name>
        <dbReference type="ChEBI" id="CHEBI:18420"/>
    </ligand>
</feature>
<feature type="binding site" evidence="1">
    <location>
        <position position="206"/>
    </location>
    <ligand>
        <name>Mg(2+)</name>
        <dbReference type="ChEBI" id="CHEBI:18420"/>
    </ligand>
</feature>
<feature type="binding site" evidence="1">
    <location>
        <position position="296"/>
    </location>
    <ligand>
        <name>substrate</name>
    </ligand>
</feature>
<feature type="binding site" evidence="1">
    <location>
        <position position="328"/>
    </location>
    <ligand>
        <name>substrate</name>
    </ligand>
</feature>
<feature type="binding site" evidence="1">
    <location>
        <position position="380"/>
    </location>
    <ligand>
        <name>substrate</name>
    </ligand>
</feature>
<feature type="site" description="Transition state stabilizer" evidence="1">
    <location>
        <position position="335"/>
    </location>
</feature>
<feature type="modified residue" description="N6-carboxylysine" evidence="1">
    <location>
        <position position="203"/>
    </location>
</feature>
<comment type="function">
    <text evidence="1">RuBisCO catalyzes two reactions: the carboxylation of D-ribulose 1,5-bisphosphate, the primary event in carbon dioxide fixation, as well as the oxidative fragmentation of the pentose substrate. Both reactions occur simultaneously and in competition at the same active site.</text>
</comment>
<comment type="catalytic activity">
    <reaction evidence="1">
        <text>2 (2R)-3-phosphoglycerate + 2 H(+) = D-ribulose 1,5-bisphosphate + CO2 + H2O</text>
        <dbReference type="Rhea" id="RHEA:23124"/>
        <dbReference type="ChEBI" id="CHEBI:15377"/>
        <dbReference type="ChEBI" id="CHEBI:15378"/>
        <dbReference type="ChEBI" id="CHEBI:16526"/>
        <dbReference type="ChEBI" id="CHEBI:57870"/>
        <dbReference type="ChEBI" id="CHEBI:58272"/>
        <dbReference type="EC" id="4.1.1.39"/>
    </reaction>
</comment>
<comment type="catalytic activity">
    <reaction evidence="1">
        <text>D-ribulose 1,5-bisphosphate + O2 = 2-phosphoglycolate + (2R)-3-phosphoglycerate + 2 H(+)</text>
        <dbReference type="Rhea" id="RHEA:36631"/>
        <dbReference type="ChEBI" id="CHEBI:15378"/>
        <dbReference type="ChEBI" id="CHEBI:15379"/>
        <dbReference type="ChEBI" id="CHEBI:57870"/>
        <dbReference type="ChEBI" id="CHEBI:58033"/>
        <dbReference type="ChEBI" id="CHEBI:58272"/>
    </reaction>
</comment>
<comment type="cofactor">
    <cofactor evidence="1">
        <name>Mg(2+)</name>
        <dbReference type="ChEBI" id="CHEBI:18420"/>
    </cofactor>
    <text evidence="1">Binds 1 Mg(2+) ion per subunit.</text>
</comment>
<comment type="subunit">
    <text evidence="1">Heterohexadecamer of 8 large chains and 8 small chains.</text>
</comment>
<comment type="miscellaneous">
    <text evidence="1">The basic functional RuBisCO is composed of a large chain homodimer in a 'head-to-tail' conformation. In form I RuBisCO this homodimer is arranged in a barrel-like tetramer with the small subunits forming a tetrameric 'cap' on each end of the 'barrel'.</text>
</comment>
<comment type="similarity">
    <text evidence="1">Belongs to the RuBisCO large chain family. Type I subfamily.</text>
</comment>
<keyword id="KW-0113">Calvin cycle</keyword>
<keyword id="KW-0120">Carbon dioxide fixation</keyword>
<keyword id="KW-0456">Lyase</keyword>
<keyword id="KW-0460">Magnesium</keyword>
<keyword id="KW-0479">Metal-binding</keyword>
<keyword id="KW-0503">Monooxygenase</keyword>
<keyword id="KW-0560">Oxidoreductase</keyword>
<keyword id="KW-0602">Photosynthesis</keyword>
<keyword id="KW-1185">Reference proteome</keyword>